<evidence type="ECO:0000255" key="1"/>
<evidence type="ECO:0000305" key="2"/>
<comment type="subcellular location">
    <subcellularLocation>
        <location evidence="2">Cell membrane</location>
        <topology evidence="2">Multi-pass membrane protein</topology>
    </subcellularLocation>
</comment>
<feature type="chain" id="PRO_0000186994" description="Uncharacterized protein aq_aa23">
    <location>
        <begin position="1"/>
        <end position="271"/>
    </location>
</feature>
<feature type="transmembrane region" description="Helical" evidence="1">
    <location>
        <begin position="30"/>
        <end position="50"/>
    </location>
</feature>
<feature type="transmembrane region" description="Helical" evidence="1">
    <location>
        <begin position="189"/>
        <end position="209"/>
    </location>
</feature>
<feature type="transmembrane region" description="Helical" evidence="1">
    <location>
        <begin position="218"/>
        <end position="238"/>
    </location>
</feature>
<gene>
    <name type="ordered locus">aq_aa23</name>
</gene>
<accession>O66414</accession>
<protein>
    <recommendedName>
        <fullName>Uncharacterized protein aq_aa23</fullName>
    </recommendedName>
</protein>
<organism>
    <name type="scientific">Aquifex aeolicus (strain VF5)</name>
    <dbReference type="NCBI Taxonomy" id="224324"/>
    <lineage>
        <taxon>Bacteria</taxon>
        <taxon>Pseudomonadati</taxon>
        <taxon>Aquificota</taxon>
        <taxon>Aquificia</taxon>
        <taxon>Aquificales</taxon>
        <taxon>Aquificaceae</taxon>
        <taxon>Aquifex</taxon>
    </lineage>
</organism>
<keyword id="KW-1003">Cell membrane</keyword>
<keyword id="KW-0472">Membrane</keyword>
<keyword id="KW-0614">Plasmid</keyword>
<keyword id="KW-1185">Reference proteome</keyword>
<keyword id="KW-0812">Transmembrane</keyword>
<keyword id="KW-1133">Transmembrane helix</keyword>
<geneLocation type="plasmid">
    <name>ece1</name>
</geneLocation>
<name>YZ23_AQUAE</name>
<proteinExistence type="predicted"/>
<reference key="1">
    <citation type="journal article" date="1998" name="Nature">
        <title>The complete genome of the hyperthermophilic bacterium Aquifex aeolicus.</title>
        <authorList>
            <person name="Deckert G."/>
            <person name="Warren P.V."/>
            <person name="Gaasterland T."/>
            <person name="Young W.G."/>
            <person name="Lenox A.L."/>
            <person name="Graham D.E."/>
            <person name="Overbeek R."/>
            <person name="Snead M.A."/>
            <person name="Keller M."/>
            <person name="Aujay M."/>
            <person name="Huber R."/>
            <person name="Feldman R.A."/>
            <person name="Short J.M."/>
            <person name="Olsen G.J."/>
            <person name="Swanson R.V."/>
        </authorList>
    </citation>
    <scope>NUCLEOTIDE SEQUENCE [LARGE SCALE GENOMIC DNA]</scope>
    <source>
        <strain>VF5</strain>
    </source>
</reference>
<sequence>MNSKELTKEVLNLFQTLPEFYFEHFHEYGIWFPIVVGIIASAVGMFGMLLFYAAEPDTEFEKLPFFVRKIASREGDEDTYFALGIYPIIILPAEGKIIKAAAIHEFFHVLFKFPWVIFQPVTGIFMTQLPYRFFNMLTQFLYTVLPKHIVLMLILLSMPILKKFGMEKSQVYELLSLASKYITFVYICALAAVIEELLVNIATAIYFLITFKFNENTFLVTVGSSLTYLSNIPMIFACMWMDFHYADGQGVEMAKKFIELVFKTELSSLFF</sequence>
<dbReference type="EMBL" id="AE000667">
    <property type="protein sequence ID" value="AAC07966.1"/>
    <property type="molecule type" value="Genomic_DNA"/>
</dbReference>
<dbReference type="RefSeq" id="NP_046414.1">
    <property type="nucleotide sequence ID" value="NC_001880.1"/>
</dbReference>
<dbReference type="RefSeq" id="WP_010890560.1">
    <property type="nucleotide sequence ID" value="NC_001880.1"/>
</dbReference>
<dbReference type="EnsemblBacteria" id="AAC07966">
    <property type="protein sequence ID" value="AAC07966"/>
    <property type="gene ID" value="aq_aa23"/>
</dbReference>
<dbReference type="KEGG" id="aae:aq_aa23"/>
<dbReference type="HOGENOM" id="CLU_1025444_0_0_0"/>
<dbReference type="InParanoid" id="O66414"/>
<dbReference type="Proteomes" id="UP000000798">
    <property type="component" value="Plasmid ece1"/>
</dbReference>
<dbReference type="GO" id="GO:0005886">
    <property type="term" value="C:plasma membrane"/>
    <property type="evidence" value="ECO:0007669"/>
    <property type="project" value="UniProtKB-SubCell"/>
</dbReference>